<keyword id="KW-0997">Cell inner membrane</keyword>
<keyword id="KW-1003">Cell membrane</keyword>
<keyword id="KW-0201">Cytochrome c-type biogenesis</keyword>
<keyword id="KW-0349">Heme</keyword>
<keyword id="KW-0408">Iron</keyword>
<keyword id="KW-0472">Membrane</keyword>
<keyword id="KW-0479">Metal-binding</keyword>
<keyword id="KW-0735">Signal-anchor</keyword>
<keyword id="KW-0812">Transmembrane</keyword>
<keyword id="KW-1133">Transmembrane helix</keyword>
<gene>
    <name evidence="1" type="primary">ccmE</name>
    <name evidence="1" type="synonym">cycJ</name>
    <name type="ordered locus">PSPA7_3848</name>
</gene>
<protein>
    <recommendedName>
        <fullName evidence="1">Cytochrome c-type biogenesis protein CcmE</fullName>
    </recommendedName>
    <alternativeName>
        <fullName evidence="1">Cytochrome c maturation protein E</fullName>
    </alternativeName>
    <alternativeName>
        <fullName evidence="1">Heme chaperone CcmE</fullName>
    </alternativeName>
</protein>
<reference key="1">
    <citation type="submission" date="2007-06" db="EMBL/GenBank/DDBJ databases">
        <authorList>
            <person name="Dodson R.J."/>
            <person name="Harkins D."/>
            <person name="Paulsen I.T."/>
        </authorList>
    </citation>
    <scope>NUCLEOTIDE SEQUENCE [LARGE SCALE GENOMIC DNA]</scope>
    <source>
        <strain>DSM 24068 / PA7</strain>
    </source>
</reference>
<organism>
    <name type="scientific">Pseudomonas paraeruginosa (strain DSM 24068 / PA7)</name>
    <name type="common">Pseudomonas aeruginosa (strain PA7)</name>
    <dbReference type="NCBI Taxonomy" id="381754"/>
    <lineage>
        <taxon>Bacteria</taxon>
        <taxon>Pseudomonadati</taxon>
        <taxon>Pseudomonadota</taxon>
        <taxon>Gammaproteobacteria</taxon>
        <taxon>Pseudomonadales</taxon>
        <taxon>Pseudomonadaceae</taxon>
        <taxon>Pseudomonas</taxon>
        <taxon>Pseudomonas paraeruginosa</taxon>
    </lineage>
</organism>
<name>CCME_PSEP7</name>
<dbReference type="EMBL" id="CP000744">
    <property type="protein sequence ID" value="ABR81023.1"/>
    <property type="molecule type" value="Genomic_DNA"/>
</dbReference>
<dbReference type="RefSeq" id="WP_012076391.1">
    <property type="nucleotide sequence ID" value="NC_009656.1"/>
</dbReference>
<dbReference type="SMR" id="A6V817"/>
<dbReference type="GeneID" id="77221901"/>
<dbReference type="KEGG" id="pap:PSPA7_3848"/>
<dbReference type="HOGENOM" id="CLU_079503_1_1_6"/>
<dbReference type="Proteomes" id="UP000001582">
    <property type="component" value="Chromosome"/>
</dbReference>
<dbReference type="GO" id="GO:0005886">
    <property type="term" value="C:plasma membrane"/>
    <property type="evidence" value="ECO:0007669"/>
    <property type="project" value="UniProtKB-SubCell"/>
</dbReference>
<dbReference type="GO" id="GO:0020037">
    <property type="term" value="F:heme binding"/>
    <property type="evidence" value="ECO:0007669"/>
    <property type="project" value="InterPro"/>
</dbReference>
<dbReference type="GO" id="GO:0046872">
    <property type="term" value="F:metal ion binding"/>
    <property type="evidence" value="ECO:0007669"/>
    <property type="project" value="UniProtKB-KW"/>
</dbReference>
<dbReference type="GO" id="GO:0017004">
    <property type="term" value="P:cytochrome complex assembly"/>
    <property type="evidence" value="ECO:0007669"/>
    <property type="project" value="UniProtKB-KW"/>
</dbReference>
<dbReference type="FunFam" id="2.40.50.140:FF:000104">
    <property type="entry name" value="Cytochrome c-type biogenesis protein CcmE"/>
    <property type="match status" value="1"/>
</dbReference>
<dbReference type="Gene3D" id="2.40.50.140">
    <property type="entry name" value="Nucleic acid-binding proteins"/>
    <property type="match status" value="1"/>
</dbReference>
<dbReference type="HAMAP" id="MF_01959">
    <property type="entry name" value="CcmE"/>
    <property type="match status" value="1"/>
</dbReference>
<dbReference type="InterPro" id="IPR004329">
    <property type="entry name" value="CcmE"/>
</dbReference>
<dbReference type="InterPro" id="IPR036127">
    <property type="entry name" value="CcmE-like_sf"/>
</dbReference>
<dbReference type="InterPro" id="IPR012340">
    <property type="entry name" value="NA-bd_OB-fold"/>
</dbReference>
<dbReference type="NCBIfam" id="NF009727">
    <property type="entry name" value="PRK13254.1-1"/>
    <property type="match status" value="1"/>
</dbReference>
<dbReference type="NCBIfam" id="NF009729">
    <property type="entry name" value="PRK13254.1-3"/>
    <property type="match status" value="1"/>
</dbReference>
<dbReference type="NCBIfam" id="NF009731">
    <property type="entry name" value="PRK13254.1-5"/>
    <property type="match status" value="1"/>
</dbReference>
<dbReference type="PANTHER" id="PTHR34128">
    <property type="entry name" value="CYTOCHROME C-TYPE BIOGENESIS PROTEIN CCME HOMOLOG, MITOCHONDRIAL"/>
    <property type="match status" value="1"/>
</dbReference>
<dbReference type="PANTHER" id="PTHR34128:SF2">
    <property type="entry name" value="CYTOCHROME C-TYPE BIOGENESIS PROTEIN CCME HOMOLOG, MITOCHONDRIAL"/>
    <property type="match status" value="1"/>
</dbReference>
<dbReference type="Pfam" id="PF03100">
    <property type="entry name" value="CcmE"/>
    <property type="match status" value="1"/>
</dbReference>
<dbReference type="SUPFAM" id="SSF82093">
    <property type="entry name" value="Heme chaperone CcmE"/>
    <property type="match status" value="1"/>
</dbReference>
<accession>A6V817</accession>
<feature type="chain" id="PRO_1000070830" description="Cytochrome c-type biogenesis protein CcmE">
    <location>
        <begin position="1"/>
        <end position="162"/>
    </location>
</feature>
<feature type="topological domain" description="Cytoplasmic" evidence="1">
    <location>
        <begin position="1"/>
        <end position="8"/>
    </location>
</feature>
<feature type="transmembrane region" description="Helical; Signal-anchor for type II membrane protein" evidence="1">
    <location>
        <begin position="9"/>
        <end position="29"/>
    </location>
</feature>
<feature type="topological domain" description="Periplasmic" evidence="1">
    <location>
        <begin position="30"/>
        <end position="162"/>
    </location>
</feature>
<feature type="region of interest" description="Disordered" evidence="2">
    <location>
        <begin position="139"/>
        <end position="162"/>
    </location>
</feature>
<feature type="compositionally biased region" description="Basic and acidic residues" evidence="2">
    <location>
        <begin position="139"/>
        <end position="148"/>
    </location>
</feature>
<feature type="binding site" description="covalent" evidence="1">
    <location>
        <position position="124"/>
    </location>
    <ligand>
        <name>heme</name>
        <dbReference type="ChEBI" id="CHEBI:30413"/>
    </ligand>
</feature>
<feature type="binding site" description="axial binding residue" evidence="1">
    <location>
        <position position="128"/>
    </location>
    <ligand>
        <name>heme</name>
        <dbReference type="ChEBI" id="CHEBI:30413"/>
    </ligand>
    <ligandPart>
        <name>Fe</name>
        <dbReference type="ChEBI" id="CHEBI:18248"/>
    </ligandPart>
</feature>
<sequence>MNPVRKKRLIIVLAILVGVGAAVGLALSALQQNINLFYTPTQIANGEAPTDTRIRAGGLVEKGSLQRSADSLNVRFVVTDGAKEVTIAYHGILPDLFREGQGIVALGKLGGDGVLVADEVLAKHDENYMPPEVTKALKDSGQLKHYENGKAAGETSYNQEGK</sequence>
<evidence type="ECO:0000255" key="1">
    <source>
        <dbReference type="HAMAP-Rule" id="MF_01959"/>
    </source>
</evidence>
<evidence type="ECO:0000256" key="2">
    <source>
        <dbReference type="SAM" id="MobiDB-lite"/>
    </source>
</evidence>
<comment type="function">
    <text evidence="1">Heme chaperone required for the biogenesis of c-type cytochromes. Transiently binds heme delivered by CcmC and transfers the heme to apo-cytochromes in a process facilitated by CcmF and CcmH.</text>
</comment>
<comment type="subcellular location">
    <subcellularLocation>
        <location evidence="1">Cell inner membrane</location>
        <topology evidence="1">Single-pass type II membrane protein</topology>
        <orientation evidence="1">Periplasmic side</orientation>
    </subcellularLocation>
</comment>
<comment type="similarity">
    <text evidence="1">Belongs to the CcmE/CycJ family.</text>
</comment>
<proteinExistence type="inferred from homology"/>